<dbReference type="EC" id="6.1.1.16"/>
<dbReference type="EMBL" id="AE000657">
    <property type="protein sequence ID" value="AAC07125.1"/>
    <property type="molecule type" value="Genomic_DNA"/>
</dbReference>
<dbReference type="PIR" id="H70391">
    <property type="entry name" value="H70391"/>
</dbReference>
<dbReference type="RefSeq" id="NP_213726.1">
    <property type="nucleotide sequence ID" value="NC_000918.1"/>
</dbReference>
<dbReference type="RefSeq" id="WP_010880664.1">
    <property type="nucleotide sequence ID" value="NC_000918.1"/>
</dbReference>
<dbReference type="SMR" id="O67163"/>
<dbReference type="FunCoup" id="O67163">
    <property type="interactions" value="425"/>
</dbReference>
<dbReference type="STRING" id="224324.aq_1068"/>
<dbReference type="EnsemblBacteria" id="AAC07125">
    <property type="protein sequence ID" value="AAC07125"/>
    <property type="gene ID" value="aq_1068"/>
</dbReference>
<dbReference type="KEGG" id="aae:aq_1068"/>
<dbReference type="PATRIC" id="fig|224324.8.peg.830"/>
<dbReference type="eggNOG" id="COG0215">
    <property type="taxonomic scope" value="Bacteria"/>
</dbReference>
<dbReference type="HOGENOM" id="CLU_013528_0_1_0"/>
<dbReference type="InParanoid" id="O67163"/>
<dbReference type="OrthoDB" id="9815130at2"/>
<dbReference type="Proteomes" id="UP000000798">
    <property type="component" value="Chromosome"/>
</dbReference>
<dbReference type="GO" id="GO:0005737">
    <property type="term" value="C:cytoplasm"/>
    <property type="evidence" value="ECO:0000318"/>
    <property type="project" value="GO_Central"/>
</dbReference>
<dbReference type="GO" id="GO:0005829">
    <property type="term" value="C:cytosol"/>
    <property type="evidence" value="ECO:0000318"/>
    <property type="project" value="GO_Central"/>
</dbReference>
<dbReference type="GO" id="GO:0005524">
    <property type="term" value="F:ATP binding"/>
    <property type="evidence" value="ECO:0000318"/>
    <property type="project" value="GO_Central"/>
</dbReference>
<dbReference type="GO" id="GO:0004817">
    <property type="term" value="F:cysteine-tRNA ligase activity"/>
    <property type="evidence" value="ECO:0000318"/>
    <property type="project" value="GO_Central"/>
</dbReference>
<dbReference type="GO" id="GO:0008270">
    <property type="term" value="F:zinc ion binding"/>
    <property type="evidence" value="ECO:0007669"/>
    <property type="project" value="UniProtKB-UniRule"/>
</dbReference>
<dbReference type="GO" id="GO:0006423">
    <property type="term" value="P:cysteinyl-tRNA aminoacylation"/>
    <property type="evidence" value="ECO:0000318"/>
    <property type="project" value="GO_Central"/>
</dbReference>
<dbReference type="CDD" id="cd00672">
    <property type="entry name" value="CysRS_core"/>
    <property type="match status" value="1"/>
</dbReference>
<dbReference type="FunFam" id="1.20.120.1910:FF:000018">
    <property type="entry name" value="Cysteine--tRNA ligase"/>
    <property type="match status" value="1"/>
</dbReference>
<dbReference type="FunFam" id="3.40.50.620:FF:000009">
    <property type="entry name" value="Cysteine--tRNA ligase"/>
    <property type="match status" value="1"/>
</dbReference>
<dbReference type="Gene3D" id="1.20.120.1910">
    <property type="entry name" value="Cysteine-tRNA ligase, C-terminal anti-codon recognition domain"/>
    <property type="match status" value="1"/>
</dbReference>
<dbReference type="Gene3D" id="3.40.50.620">
    <property type="entry name" value="HUPs"/>
    <property type="match status" value="1"/>
</dbReference>
<dbReference type="HAMAP" id="MF_00041">
    <property type="entry name" value="Cys_tRNA_synth"/>
    <property type="match status" value="1"/>
</dbReference>
<dbReference type="InterPro" id="IPR015803">
    <property type="entry name" value="Cys-tRNA-ligase"/>
</dbReference>
<dbReference type="InterPro" id="IPR015273">
    <property type="entry name" value="Cys-tRNA-synt_Ia_DALR"/>
</dbReference>
<dbReference type="InterPro" id="IPR024909">
    <property type="entry name" value="Cys-tRNA/MSH_ligase"/>
</dbReference>
<dbReference type="InterPro" id="IPR056411">
    <property type="entry name" value="CysS_C"/>
</dbReference>
<dbReference type="InterPro" id="IPR014729">
    <property type="entry name" value="Rossmann-like_a/b/a_fold"/>
</dbReference>
<dbReference type="InterPro" id="IPR032678">
    <property type="entry name" value="tRNA-synt_1_cat_dom"/>
</dbReference>
<dbReference type="InterPro" id="IPR009080">
    <property type="entry name" value="tRNAsynth_Ia_anticodon-bd"/>
</dbReference>
<dbReference type="NCBIfam" id="TIGR00435">
    <property type="entry name" value="cysS"/>
    <property type="match status" value="1"/>
</dbReference>
<dbReference type="PANTHER" id="PTHR10890:SF3">
    <property type="entry name" value="CYSTEINE--TRNA LIGASE, CYTOPLASMIC"/>
    <property type="match status" value="1"/>
</dbReference>
<dbReference type="PANTHER" id="PTHR10890">
    <property type="entry name" value="CYSTEINYL-TRNA SYNTHETASE"/>
    <property type="match status" value="1"/>
</dbReference>
<dbReference type="Pfam" id="PF23493">
    <property type="entry name" value="CysS_C"/>
    <property type="match status" value="1"/>
</dbReference>
<dbReference type="Pfam" id="PF09190">
    <property type="entry name" value="DALR_2"/>
    <property type="match status" value="1"/>
</dbReference>
<dbReference type="Pfam" id="PF01406">
    <property type="entry name" value="tRNA-synt_1e"/>
    <property type="match status" value="1"/>
</dbReference>
<dbReference type="PRINTS" id="PR00983">
    <property type="entry name" value="TRNASYNTHCYS"/>
</dbReference>
<dbReference type="SMART" id="SM00840">
    <property type="entry name" value="DALR_2"/>
    <property type="match status" value="1"/>
</dbReference>
<dbReference type="SUPFAM" id="SSF47323">
    <property type="entry name" value="Anticodon-binding domain of a subclass of class I aminoacyl-tRNA synthetases"/>
    <property type="match status" value="1"/>
</dbReference>
<dbReference type="SUPFAM" id="SSF52374">
    <property type="entry name" value="Nucleotidylyl transferase"/>
    <property type="match status" value="1"/>
</dbReference>
<name>SYC_AQUAE</name>
<feature type="chain" id="PRO_0000159340" description="Cysteine--tRNA ligase">
    <location>
        <begin position="1"/>
        <end position="495"/>
    </location>
</feature>
<feature type="short sequence motif" description="'HIGH' region">
    <location>
        <begin position="31"/>
        <end position="41"/>
    </location>
</feature>
<feature type="short sequence motif" description="'KMSKS' region">
    <location>
        <begin position="266"/>
        <end position="270"/>
    </location>
</feature>
<feature type="binding site" evidence="1">
    <location>
        <position position="29"/>
    </location>
    <ligand>
        <name>Zn(2+)</name>
        <dbReference type="ChEBI" id="CHEBI:29105"/>
    </ligand>
</feature>
<feature type="binding site" evidence="1">
    <location>
        <position position="209"/>
    </location>
    <ligand>
        <name>Zn(2+)</name>
        <dbReference type="ChEBI" id="CHEBI:29105"/>
    </ligand>
</feature>
<feature type="binding site" evidence="1">
    <location>
        <position position="234"/>
    </location>
    <ligand>
        <name>Zn(2+)</name>
        <dbReference type="ChEBI" id="CHEBI:29105"/>
    </ligand>
</feature>
<feature type="binding site" evidence="1">
    <location>
        <position position="238"/>
    </location>
    <ligand>
        <name>Zn(2+)</name>
        <dbReference type="ChEBI" id="CHEBI:29105"/>
    </ligand>
</feature>
<feature type="binding site" evidence="1">
    <location>
        <position position="269"/>
    </location>
    <ligand>
        <name>ATP</name>
        <dbReference type="ChEBI" id="CHEBI:30616"/>
    </ligand>
</feature>
<sequence>MSLRIYNTLSGKVEEFVPINPPKVLIYTCGVTVYDDSHVGHGRSLIVFDVFRRFLEHLGYQVKFVRNFTDVDDKIINRAKQECTDFMTIADRYIARYYVDMENIRVRPADVEPRVTEHIPEIIEVIQKLVEKGYAYVVEGDVYFSVKKFKDYGKLSKRDIEELIAGARVEPSEKKRDPLDFALWKASKAGEPAWDSPWGKGRPGWHTECVAMVFKHLGETIDIHGGGLDLVFPHHENEIAQAEAITGKPFARYWMHNGLVTVGGQKMSKSLGNYVTLREVYTKYHPDVLRLLVLFTHYRSPLDFSWEKMEETLKAYERLKNAIEDLELLKKLQVVESKEGGTHPLYEQVKEFEENFYASLSDDFNTPEALSHVYKLVGELNKVKNKAYSEGKITDRELSAYEFASKSLLNTMKKIFGLLEDLYPECKVERVVERELEAGQVFDEKLIQILIEARNIARKEKVFKVADYIRDKLKELGIVLEDTPAGTKWKKREGA</sequence>
<comment type="catalytic activity">
    <reaction>
        <text>tRNA(Cys) + L-cysteine + ATP = L-cysteinyl-tRNA(Cys) + AMP + diphosphate</text>
        <dbReference type="Rhea" id="RHEA:17773"/>
        <dbReference type="Rhea" id="RHEA-COMP:9661"/>
        <dbReference type="Rhea" id="RHEA-COMP:9679"/>
        <dbReference type="ChEBI" id="CHEBI:30616"/>
        <dbReference type="ChEBI" id="CHEBI:33019"/>
        <dbReference type="ChEBI" id="CHEBI:35235"/>
        <dbReference type="ChEBI" id="CHEBI:78442"/>
        <dbReference type="ChEBI" id="CHEBI:78517"/>
        <dbReference type="ChEBI" id="CHEBI:456215"/>
        <dbReference type="EC" id="6.1.1.16"/>
    </reaction>
</comment>
<comment type="cofactor">
    <cofactor evidence="1">
        <name>Zn(2+)</name>
        <dbReference type="ChEBI" id="CHEBI:29105"/>
    </cofactor>
    <text evidence="1">Binds 1 zinc ion per subunit.</text>
</comment>
<comment type="subunit">
    <text evidence="1">Monomer.</text>
</comment>
<comment type="subcellular location">
    <subcellularLocation>
        <location evidence="1">Cytoplasm</location>
    </subcellularLocation>
</comment>
<comment type="similarity">
    <text evidence="2">Belongs to the class-I aminoacyl-tRNA synthetase family.</text>
</comment>
<evidence type="ECO:0000250" key="1"/>
<evidence type="ECO:0000305" key="2"/>
<reference key="1">
    <citation type="journal article" date="1998" name="Nature">
        <title>The complete genome of the hyperthermophilic bacterium Aquifex aeolicus.</title>
        <authorList>
            <person name="Deckert G."/>
            <person name="Warren P.V."/>
            <person name="Gaasterland T."/>
            <person name="Young W.G."/>
            <person name="Lenox A.L."/>
            <person name="Graham D.E."/>
            <person name="Overbeek R."/>
            <person name="Snead M.A."/>
            <person name="Keller M."/>
            <person name="Aujay M."/>
            <person name="Huber R."/>
            <person name="Feldman R.A."/>
            <person name="Short J.M."/>
            <person name="Olsen G.J."/>
            <person name="Swanson R.V."/>
        </authorList>
    </citation>
    <scope>NUCLEOTIDE SEQUENCE [LARGE SCALE GENOMIC DNA]</scope>
    <source>
        <strain>VF5</strain>
    </source>
</reference>
<accession>O67163</accession>
<proteinExistence type="inferred from homology"/>
<gene>
    <name type="primary">cysS</name>
    <name type="ordered locus">aq_1068</name>
</gene>
<protein>
    <recommendedName>
        <fullName>Cysteine--tRNA ligase</fullName>
        <ecNumber>6.1.1.16</ecNumber>
    </recommendedName>
    <alternativeName>
        <fullName>Cysteinyl-tRNA synthetase</fullName>
        <shortName>CysRS</shortName>
    </alternativeName>
</protein>
<keyword id="KW-0030">Aminoacyl-tRNA synthetase</keyword>
<keyword id="KW-0067">ATP-binding</keyword>
<keyword id="KW-0963">Cytoplasm</keyword>
<keyword id="KW-0436">Ligase</keyword>
<keyword id="KW-0479">Metal-binding</keyword>
<keyword id="KW-0547">Nucleotide-binding</keyword>
<keyword id="KW-0648">Protein biosynthesis</keyword>
<keyword id="KW-1185">Reference proteome</keyword>
<keyword id="KW-0862">Zinc</keyword>
<organism>
    <name type="scientific">Aquifex aeolicus (strain VF5)</name>
    <dbReference type="NCBI Taxonomy" id="224324"/>
    <lineage>
        <taxon>Bacteria</taxon>
        <taxon>Pseudomonadati</taxon>
        <taxon>Aquificota</taxon>
        <taxon>Aquificia</taxon>
        <taxon>Aquificales</taxon>
        <taxon>Aquificaceae</taxon>
        <taxon>Aquifex</taxon>
    </lineage>
</organism>